<dbReference type="RefSeq" id="NP_001388751.1">
    <property type="nucleotide sequence ID" value="NM_001401822.1"/>
</dbReference>
<dbReference type="RefSeq" id="XP_008758990.2">
    <property type="nucleotide sequence ID" value="XM_008760768.2"/>
</dbReference>
<dbReference type="PDB" id="3TFM">
    <property type="method" value="X-ray"/>
    <property type="resolution" value="2.53 A"/>
    <property type="chains" value="A=1178-1385"/>
</dbReference>
<dbReference type="PDBsum" id="3TFM"/>
<dbReference type="SMR" id="D3ZJP6"/>
<dbReference type="FunCoup" id="D3ZJP6">
    <property type="interactions" value="778"/>
</dbReference>
<dbReference type="STRING" id="10116.ENSRNOP00000063102"/>
<dbReference type="iPTMnet" id="D3ZJP6"/>
<dbReference type="PhosphoSitePlus" id="D3ZJP6"/>
<dbReference type="PaxDb" id="10116-ENSRNOP00000063102"/>
<dbReference type="PeptideAtlas" id="D3ZJP6"/>
<dbReference type="Ensembl" id="ENSRNOT00000065897.5">
    <property type="protein sequence ID" value="ENSRNOP00000063102.2"/>
    <property type="gene ID" value="ENSRNOG00000010161.9"/>
</dbReference>
<dbReference type="GeneID" id="310178"/>
<dbReference type="AGR" id="RGD:1307193"/>
<dbReference type="RGD" id="1307193">
    <property type="gene designation" value="Myo10"/>
</dbReference>
<dbReference type="eggNOG" id="KOG4229">
    <property type="taxonomic scope" value="Eukaryota"/>
</dbReference>
<dbReference type="GeneTree" id="ENSGT00940000155469"/>
<dbReference type="InParanoid" id="D3ZJP6"/>
<dbReference type="OMA" id="HSEWQLG"/>
<dbReference type="OrthoDB" id="6108017at2759"/>
<dbReference type="TreeFam" id="TF316834"/>
<dbReference type="Reactome" id="R-RNO-2029482">
    <property type="pathway name" value="Regulation of actin dynamics for phagocytic cup formation"/>
</dbReference>
<dbReference type="EvolutionaryTrace" id="D3ZJP6"/>
<dbReference type="PRO" id="PR:D3ZJP6"/>
<dbReference type="Proteomes" id="UP000002494">
    <property type="component" value="Chromosome 2"/>
</dbReference>
<dbReference type="Bgee" id="ENSRNOG00000010161">
    <property type="expression patterns" value="Expressed in lung and 18 other cell types or tissues"/>
</dbReference>
<dbReference type="ExpressionAtlas" id="D3ZJP6">
    <property type="expression patterns" value="baseline and differential"/>
</dbReference>
<dbReference type="GO" id="GO:0005938">
    <property type="term" value="C:cell cortex"/>
    <property type="evidence" value="ECO:0007669"/>
    <property type="project" value="UniProtKB-SubCell"/>
</dbReference>
<dbReference type="GO" id="GO:0005829">
    <property type="term" value="C:cytosol"/>
    <property type="evidence" value="ECO:0007669"/>
    <property type="project" value="UniProtKB-SubCell"/>
</dbReference>
<dbReference type="GO" id="GO:0030175">
    <property type="term" value="C:filopodium"/>
    <property type="evidence" value="ECO:0000266"/>
    <property type="project" value="RGD"/>
</dbReference>
<dbReference type="GO" id="GO:0031527">
    <property type="term" value="C:filopodium membrane"/>
    <property type="evidence" value="ECO:0007669"/>
    <property type="project" value="UniProtKB-SubCell"/>
</dbReference>
<dbReference type="GO" id="GO:0032433">
    <property type="term" value="C:filopodium tip"/>
    <property type="evidence" value="ECO:0000250"/>
    <property type="project" value="UniProtKB"/>
</dbReference>
<dbReference type="GO" id="GO:0030027">
    <property type="term" value="C:lamellipodium"/>
    <property type="evidence" value="ECO:0007669"/>
    <property type="project" value="UniProtKB-SubCell"/>
</dbReference>
<dbReference type="GO" id="GO:0016459">
    <property type="term" value="C:myosin complex"/>
    <property type="evidence" value="ECO:0007669"/>
    <property type="project" value="UniProtKB-KW"/>
</dbReference>
<dbReference type="GO" id="GO:0043005">
    <property type="term" value="C:neuron projection"/>
    <property type="evidence" value="ECO:0000266"/>
    <property type="project" value="RGD"/>
</dbReference>
<dbReference type="GO" id="GO:0043025">
    <property type="term" value="C:neuronal cell body"/>
    <property type="evidence" value="ECO:0000266"/>
    <property type="project" value="RGD"/>
</dbReference>
<dbReference type="GO" id="GO:0005730">
    <property type="term" value="C:nucleolus"/>
    <property type="evidence" value="ECO:0007669"/>
    <property type="project" value="Ensembl"/>
</dbReference>
<dbReference type="GO" id="GO:0001726">
    <property type="term" value="C:ruffle"/>
    <property type="evidence" value="ECO:0007669"/>
    <property type="project" value="UniProtKB-SubCell"/>
</dbReference>
<dbReference type="GO" id="GO:0051015">
    <property type="term" value="F:actin filament binding"/>
    <property type="evidence" value="ECO:0000250"/>
    <property type="project" value="UniProtKB"/>
</dbReference>
<dbReference type="GO" id="GO:0005524">
    <property type="term" value="F:ATP binding"/>
    <property type="evidence" value="ECO:0007669"/>
    <property type="project" value="UniProtKB-KW"/>
</dbReference>
<dbReference type="GO" id="GO:0005516">
    <property type="term" value="F:calmodulin binding"/>
    <property type="evidence" value="ECO:0007669"/>
    <property type="project" value="UniProtKB-KW"/>
</dbReference>
<dbReference type="GO" id="GO:0000146">
    <property type="term" value="F:microfilament motor activity"/>
    <property type="evidence" value="ECO:0000250"/>
    <property type="project" value="UniProtKB"/>
</dbReference>
<dbReference type="GO" id="GO:0005547">
    <property type="term" value="F:phosphatidylinositol-3,4,5-trisphosphate binding"/>
    <property type="evidence" value="ECO:0000250"/>
    <property type="project" value="UniProtKB"/>
</dbReference>
<dbReference type="GO" id="GO:0060002">
    <property type="term" value="F:plus-end directed microfilament motor activity"/>
    <property type="evidence" value="ECO:0000250"/>
    <property type="project" value="UniProtKB"/>
</dbReference>
<dbReference type="GO" id="GO:0030507">
    <property type="term" value="F:spectrin binding"/>
    <property type="evidence" value="ECO:0000266"/>
    <property type="project" value="RGD"/>
</dbReference>
<dbReference type="GO" id="GO:0030705">
    <property type="term" value="P:cytoskeleton-dependent intracellular transport"/>
    <property type="evidence" value="ECO:0000250"/>
    <property type="project" value="UniProtKB"/>
</dbReference>
<dbReference type="GO" id="GO:0022409">
    <property type="term" value="P:positive regulation of cell-cell adhesion"/>
    <property type="evidence" value="ECO:0000266"/>
    <property type="project" value="RGD"/>
</dbReference>
<dbReference type="GO" id="GO:0008360">
    <property type="term" value="P:regulation of cell shape"/>
    <property type="evidence" value="ECO:0000250"/>
    <property type="project" value="UniProtKB"/>
</dbReference>
<dbReference type="GO" id="GO:0051489">
    <property type="term" value="P:regulation of filopodium assembly"/>
    <property type="evidence" value="ECO:0000250"/>
    <property type="project" value="UniProtKB"/>
</dbReference>
<dbReference type="CDD" id="cd14473">
    <property type="entry name" value="FERM_B-lobe"/>
    <property type="match status" value="1"/>
</dbReference>
<dbReference type="CDD" id="cd13202">
    <property type="entry name" value="FERM_C_MyoX"/>
    <property type="match status" value="1"/>
</dbReference>
<dbReference type="CDD" id="cd17206">
    <property type="entry name" value="FERM_F1_Myosin-X"/>
    <property type="match status" value="1"/>
</dbReference>
<dbReference type="CDD" id="cd14873">
    <property type="entry name" value="MYSc_Myo10"/>
    <property type="match status" value="1"/>
</dbReference>
<dbReference type="CDD" id="cd13296">
    <property type="entry name" value="PH2_MyoX"/>
    <property type="match status" value="1"/>
</dbReference>
<dbReference type="CDD" id="cd13297">
    <property type="entry name" value="PH3_MyoX-like"/>
    <property type="match status" value="1"/>
</dbReference>
<dbReference type="FunFam" id="1.10.10.820:FF:000001">
    <property type="entry name" value="Myosin heavy chain"/>
    <property type="match status" value="1"/>
</dbReference>
<dbReference type="FunFam" id="2.30.29.30:FF:000286">
    <property type="entry name" value="PH-protein kinase domain containing protein"/>
    <property type="match status" value="1"/>
</dbReference>
<dbReference type="FunFam" id="1.25.40.530:FF:000001">
    <property type="entry name" value="Pleckstrin homology domain-containing family H member 2"/>
    <property type="match status" value="1"/>
</dbReference>
<dbReference type="FunFam" id="3.40.850.10:FF:000008">
    <property type="entry name" value="Putative unconventional myosin-IXa"/>
    <property type="match status" value="1"/>
</dbReference>
<dbReference type="FunFam" id="1.20.80.10:FF:000020">
    <property type="entry name" value="Unconventional myosin-X"/>
    <property type="match status" value="1"/>
</dbReference>
<dbReference type="FunFam" id="2.30.29.30:FF:000195">
    <property type="entry name" value="Unconventional myosin-X"/>
    <property type="match status" value="1"/>
</dbReference>
<dbReference type="FunFam" id="2.30.29.30:FF:000196">
    <property type="entry name" value="unconventional myosin-X"/>
    <property type="match status" value="1"/>
</dbReference>
<dbReference type="FunFam" id="3.10.20.90:FF:000126">
    <property type="entry name" value="unconventional myosin-X"/>
    <property type="match status" value="1"/>
</dbReference>
<dbReference type="Gene3D" id="1.10.10.820">
    <property type="match status" value="1"/>
</dbReference>
<dbReference type="Gene3D" id="1.20.5.170">
    <property type="match status" value="1"/>
</dbReference>
<dbReference type="Gene3D" id="1.20.5.190">
    <property type="match status" value="1"/>
</dbReference>
<dbReference type="Gene3D" id="1.20.58.530">
    <property type="match status" value="1"/>
</dbReference>
<dbReference type="Gene3D" id="1.20.80.10">
    <property type="match status" value="1"/>
</dbReference>
<dbReference type="Gene3D" id="6.20.240.20">
    <property type="match status" value="1"/>
</dbReference>
<dbReference type="Gene3D" id="3.40.850.10">
    <property type="entry name" value="Kinesin motor domain"/>
    <property type="match status" value="1"/>
</dbReference>
<dbReference type="Gene3D" id="1.20.120.720">
    <property type="entry name" value="Myosin VI head, motor domain, U50 subdomain"/>
    <property type="match status" value="1"/>
</dbReference>
<dbReference type="Gene3D" id="1.25.40.530">
    <property type="entry name" value="MyTH4 domain"/>
    <property type="match status" value="1"/>
</dbReference>
<dbReference type="Gene3D" id="3.10.20.90">
    <property type="entry name" value="Phosphatidylinositol 3-kinase Catalytic Subunit, Chain A, domain 1"/>
    <property type="match status" value="1"/>
</dbReference>
<dbReference type="Gene3D" id="2.30.29.30">
    <property type="entry name" value="Pleckstrin-homology domain (PH domain)/Phosphotyrosine-binding domain (PTB)"/>
    <property type="match status" value="4"/>
</dbReference>
<dbReference type="InterPro" id="IPR051724">
    <property type="entry name" value="Actin_motor_Myosin"/>
</dbReference>
<dbReference type="InterPro" id="IPR019749">
    <property type="entry name" value="Band_41_domain"/>
</dbReference>
<dbReference type="InterPro" id="IPR014352">
    <property type="entry name" value="FERM/acyl-CoA-bd_prot_sf"/>
</dbReference>
<dbReference type="InterPro" id="IPR035963">
    <property type="entry name" value="FERM_2"/>
</dbReference>
<dbReference type="InterPro" id="IPR019748">
    <property type="entry name" value="FERM_central"/>
</dbReference>
<dbReference type="InterPro" id="IPR000299">
    <property type="entry name" value="FERM_domain"/>
</dbReference>
<dbReference type="InterPro" id="IPR000048">
    <property type="entry name" value="IQ_motif_EF-hand-BS"/>
</dbReference>
<dbReference type="InterPro" id="IPR036961">
    <property type="entry name" value="Kinesin_motor_dom_sf"/>
</dbReference>
<dbReference type="InterPro" id="IPR031971">
    <property type="entry name" value="MYO10_CC"/>
</dbReference>
<dbReference type="InterPro" id="IPR001609">
    <property type="entry name" value="Myosin_head_motor_dom-like"/>
</dbReference>
<dbReference type="InterPro" id="IPR041797">
    <property type="entry name" value="MyoX_FERM_C"/>
</dbReference>
<dbReference type="InterPro" id="IPR040640">
    <property type="entry name" value="MyoX_N_SH3"/>
</dbReference>
<dbReference type="InterPro" id="IPR036124">
    <property type="entry name" value="MYSc_Myo10"/>
</dbReference>
<dbReference type="InterPro" id="IPR000857">
    <property type="entry name" value="MyTH4_dom"/>
</dbReference>
<dbReference type="InterPro" id="IPR038185">
    <property type="entry name" value="MyTH4_dom_sf"/>
</dbReference>
<dbReference type="InterPro" id="IPR027417">
    <property type="entry name" value="P-loop_NTPase"/>
</dbReference>
<dbReference type="InterPro" id="IPR011993">
    <property type="entry name" value="PH-like_dom_sf"/>
</dbReference>
<dbReference type="InterPro" id="IPR001849">
    <property type="entry name" value="PH_domain"/>
</dbReference>
<dbReference type="PANTHER" id="PTHR46049">
    <property type="entry name" value="AGAP003327-PA"/>
    <property type="match status" value="1"/>
</dbReference>
<dbReference type="PANTHER" id="PTHR46049:SF2">
    <property type="entry name" value="UNCONVENTIONAL MYOSIN-X"/>
    <property type="match status" value="1"/>
</dbReference>
<dbReference type="Pfam" id="PF00373">
    <property type="entry name" value="FERM_M"/>
    <property type="match status" value="1"/>
</dbReference>
<dbReference type="Pfam" id="PF00612">
    <property type="entry name" value="IQ"/>
    <property type="match status" value="3"/>
</dbReference>
<dbReference type="Pfam" id="PF16735">
    <property type="entry name" value="MYO10_CC"/>
    <property type="match status" value="1"/>
</dbReference>
<dbReference type="Pfam" id="PF00063">
    <property type="entry name" value="Myosin_head"/>
    <property type="match status" value="1"/>
</dbReference>
<dbReference type="Pfam" id="PF00784">
    <property type="entry name" value="MyTH4"/>
    <property type="match status" value="1"/>
</dbReference>
<dbReference type="Pfam" id="PF00169">
    <property type="entry name" value="PH"/>
    <property type="match status" value="2"/>
</dbReference>
<dbReference type="Pfam" id="PF21989">
    <property type="entry name" value="RA_2"/>
    <property type="match status" value="1"/>
</dbReference>
<dbReference type="Pfam" id="PF18597">
    <property type="entry name" value="SH3_19"/>
    <property type="match status" value="1"/>
</dbReference>
<dbReference type="PRINTS" id="PR00193">
    <property type="entry name" value="MYOSINHEAVY"/>
</dbReference>
<dbReference type="SMART" id="SM00295">
    <property type="entry name" value="B41"/>
    <property type="match status" value="1"/>
</dbReference>
<dbReference type="SMART" id="SM00015">
    <property type="entry name" value="IQ"/>
    <property type="match status" value="3"/>
</dbReference>
<dbReference type="SMART" id="SM00242">
    <property type="entry name" value="MYSc"/>
    <property type="match status" value="1"/>
</dbReference>
<dbReference type="SMART" id="SM00139">
    <property type="entry name" value="MyTH4"/>
    <property type="match status" value="1"/>
</dbReference>
<dbReference type="SMART" id="SM00233">
    <property type="entry name" value="PH"/>
    <property type="match status" value="2"/>
</dbReference>
<dbReference type="SUPFAM" id="SSF52540">
    <property type="entry name" value="P-loop containing nucleoside triphosphate hydrolases"/>
    <property type="match status" value="1"/>
</dbReference>
<dbReference type="SUPFAM" id="SSF50729">
    <property type="entry name" value="PH domain-like"/>
    <property type="match status" value="4"/>
</dbReference>
<dbReference type="SUPFAM" id="SSF47031">
    <property type="entry name" value="Second domain of FERM"/>
    <property type="match status" value="1"/>
</dbReference>
<dbReference type="PROSITE" id="PS50057">
    <property type="entry name" value="FERM_3"/>
    <property type="match status" value="1"/>
</dbReference>
<dbReference type="PROSITE" id="PS50096">
    <property type="entry name" value="IQ"/>
    <property type="match status" value="3"/>
</dbReference>
<dbReference type="PROSITE" id="PS51456">
    <property type="entry name" value="MYOSIN_MOTOR"/>
    <property type="match status" value="1"/>
</dbReference>
<dbReference type="PROSITE" id="PS51016">
    <property type="entry name" value="MYTH4"/>
    <property type="match status" value="1"/>
</dbReference>
<dbReference type="PROSITE" id="PS50003">
    <property type="entry name" value="PH_DOMAIN"/>
    <property type="match status" value="2"/>
</dbReference>
<comment type="function">
    <text evidence="4 11">Myosins are actin-based motor molecules with ATPase activity. Unconventional myosins serve in intracellular movements. MYO10 binds to actin filaments and actin bundles and functions as a plus end-directed motor. Moves with higher velocity and takes larger steps on actin bundles than on single actin filaments (By similarity). The tail domain binds to membranous compartments containing phosphatidylinositol 3,4,5-trisphosphate or integrins, and mediates cargo transport along actin filaments. Regulates cell shape, cell spreading and cell adhesion. Stimulates the formation and elongation of filopodia. In hippocampal neurons it induces the formation of dendritic filopodia by trafficking the actin-remodeling protein VASP to the tips of filopodia, where it promotes actin elongation. Plays a role in formation of the podosome belt in osteoclasts (By similarity).</text>
</comment>
<comment type="subunit">
    <text evidence="1">Monomer, when in an inactive conformation in the cytosol. Homodimer in its active, membrane-bound conformation; antiparallel coiled coil-mediated dimer formation. Interacts with ECPAS. Interacts with DCC and ITGB5; the presence of DCC inhibits ITGB5 binding. Interacts with tubulin; ITGB5 or DCC binding inhibits tubulin binding. Interacts strongly with CALM3 and weakly with CALM, the CALM3 interaction is essential for function in filopodial extension and motility. Interacts with ITGB1, ITGB3 and ITGB5. Interacts with NEO1. Interacts with VASP (By similarity).</text>
</comment>
<comment type="subcellular location">
    <subcellularLocation>
        <location evidence="1">Cytoplasm</location>
        <location evidence="1">Cytosol</location>
    </subcellularLocation>
    <subcellularLocation>
        <location evidence="1">Cell projection</location>
        <location evidence="1">Lamellipodium</location>
    </subcellularLocation>
    <subcellularLocation>
        <location evidence="1">Cell projection</location>
        <location evidence="1">Ruffle</location>
    </subcellularLocation>
    <subcellularLocation>
        <location evidence="1">Cytoplasm</location>
        <location evidence="1">Cytoskeleton</location>
    </subcellularLocation>
    <subcellularLocation>
        <location evidence="1">Cell projection</location>
        <location evidence="1">Filopodium tip</location>
    </subcellularLocation>
    <subcellularLocation>
        <location evidence="1">Cytoplasm</location>
        <location evidence="1">Cell cortex</location>
    </subcellularLocation>
    <subcellularLocation>
        <location evidence="1">Cell projection</location>
        <location evidence="1">Filopodium membrane</location>
        <topology evidence="1">Peripheral membrane protein</topology>
    </subcellularLocation>
    <subcellularLocation>
        <location evidence="11">Cell membrane</location>
        <topology evidence="11">Peripheral membrane protein</topology>
        <orientation evidence="11">Cytoplasmic side</orientation>
    </subcellularLocation>
    <text evidence="1">May be in an inactive, monomeric conformation in the cytosol. Detected in cytoplasmic punctae and in cell projections. Colocalizes with actin fibers. Interacts with microtubules. Undergoes forward and rearward movements within filopodia. Interaction with membranes containing phosphatidylinositol 3,4,5-trisphosphate mediates localization at filopodium membranes (By similarity).</text>
</comment>
<comment type="domain">
    <text evidence="1">Interaction between the motor domain and the tail leads to an inactive, monomeric conformation. Phospholipid binding via the PH domains leads to the formation of the active, dimeric form of the protein and strongly increases actin-dependent ATPase activity and motor activity (By similarity).</text>
</comment>
<comment type="domain">
    <text evidence="11">Interacts with membranes containing phosphatidylinositol-3,4,5-trisphosphate via the PH domains.</text>
</comment>
<comment type="domain">
    <text evidence="1">IQ 3 domain mediates high-affinity calcium-dependent binding to CALM3/CLP.</text>
</comment>
<comment type="domain">
    <text evidence="2 3 4">The SAH (single alpha-helix) region is characterized by a high content of charged residues which are predicted to stabilize the alpha-helical structure by ionic bonds (By similarity). It can refold after extension suggesting an in vivo force-dependent function (By similarity). An anti-parallel coiled coil is located C-terminal to the SAH domain and mediates dimerization (By similarity).</text>
</comment>
<comment type="similarity">
    <text evidence="12">Belongs to the TRAFAC class myosin-kinesin ATPase superfamily. Myosin family.</text>
</comment>
<comment type="caution">
    <text evidence="12">Represents an unconventional myosin. This protein should not be confused with the conventional myosin-10 (MYH10).</text>
</comment>
<proteinExistence type="evidence at protein level"/>
<accession>D3ZJP6</accession>
<feature type="chain" id="PRO_0000416245" description="Unconventional myosin-X">
    <location>
        <begin position="1"/>
        <end position="2060"/>
    </location>
</feature>
<feature type="domain" description="Myosin motor" evidence="9">
    <location>
        <begin position="63"/>
        <end position="739"/>
    </location>
</feature>
<feature type="domain" description="IQ 1" evidence="6">
    <location>
        <begin position="742"/>
        <end position="771"/>
    </location>
</feature>
<feature type="domain" description="IQ 2" evidence="6">
    <location>
        <begin position="765"/>
        <end position="794"/>
    </location>
</feature>
<feature type="domain" description="IQ 3" evidence="6">
    <location>
        <begin position="788"/>
        <end position="817"/>
    </location>
</feature>
<feature type="domain" description="PH 1" evidence="7">
    <location>
        <begin position="1214"/>
        <end position="1312"/>
    </location>
</feature>
<feature type="domain" description="PH 2" evidence="7">
    <location>
        <begin position="1394"/>
        <end position="1499"/>
    </location>
</feature>
<feature type="domain" description="MyTH4" evidence="8">
    <location>
        <begin position="1549"/>
        <end position="1697"/>
    </location>
</feature>
<feature type="domain" description="FERM" evidence="5">
    <location>
        <begin position="1702"/>
        <end position="2046"/>
    </location>
</feature>
<feature type="region of interest" description="Actin-binding" evidence="9">
    <location>
        <begin position="619"/>
        <end position="641"/>
    </location>
</feature>
<feature type="region of interest" description="SAH" evidence="4">
    <location>
        <begin position="814"/>
        <end position="882"/>
    </location>
</feature>
<feature type="region of interest" description="Disordered" evidence="10">
    <location>
        <begin position="971"/>
        <end position="1039"/>
    </location>
</feature>
<feature type="region of interest" description="Disordered" evidence="10">
    <location>
        <begin position="1064"/>
        <end position="1088"/>
    </location>
</feature>
<feature type="coiled-coil region" evidence="4">
    <location>
        <begin position="883"/>
        <end position="933"/>
    </location>
</feature>
<feature type="compositionally biased region" description="Acidic residues" evidence="10">
    <location>
        <begin position="991"/>
        <end position="1005"/>
    </location>
</feature>
<feature type="compositionally biased region" description="Polar residues" evidence="10">
    <location>
        <begin position="1064"/>
        <end position="1083"/>
    </location>
</feature>
<feature type="binding site" evidence="4">
    <location>
        <position position="104"/>
    </location>
    <ligand>
        <name>ATP</name>
        <dbReference type="ChEBI" id="CHEBI:30616"/>
    </ligand>
</feature>
<feature type="binding site" evidence="4">
    <location>
        <position position="113"/>
    </location>
    <ligand>
        <name>ATP</name>
        <dbReference type="ChEBI" id="CHEBI:30616"/>
    </ligand>
</feature>
<feature type="binding site" evidence="4">
    <location>
        <begin position="160"/>
        <end position="165"/>
    </location>
    <ligand>
        <name>ATP</name>
        <dbReference type="ChEBI" id="CHEBI:30616"/>
    </ligand>
</feature>
<feature type="binding site" evidence="4">
    <location>
        <position position="215"/>
    </location>
    <ligand>
        <name>ATP</name>
        <dbReference type="ChEBI" id="CHEBI:30616"/>
    </ligand>
</feature>
<feature type="modified residue" description="N-acetylmethionine" evidence="4">
    <location>
        <position position="1"/>
    </location>
</feature>
<feature type="modified residue" description="Phosphoserine" evidence="13">
    <location>
        <position position="961"/>
    </location>
</feature>
<feature type="modified residue" description="Phosphoserine" evidence="13">
    <location>
        <position position="964"/>
    </location>
</feature>
<feature type="modified residue" description="Phosphoserine" evidence="13">
    <location>
        <position position="967"/>
    </location>
</feature>
<feature type="modified residue" description="Phosphothreonine" evidence="13">
    <location>
        <position position="1160"/>
    </location>
</feature>
<feature type="strand" evidence="14">
    <location>
        <begin position="1180"/>
        <end position="1186"/>
    </location>
</feature>
<feature type="turn" evidence="14">
    <location>
        <begin position="1189"/>
        <end position="1191"/>
    </location>
</feature>
<feature type="strand" evidence="14">
    <location>
        <begin position="1195"/>
        <end position="1202"/>
    </location>
</feature>
<feature type="strand" evidence="14">
    <location>
        <begin position="1205"/>
        <end position="1211"/>
    </location>
</feature>
<feature type="strand" evidence="14">
    <location>
        <begin position="1215"/>
        <end position="1223"/>
    </location>
</feature>
<feature type="helix" evidence="14">
    <location>
        <begin position="1225"/>
        <end position="1227"/>
    </location>
</feature>
<feature type="strand" evidence="14">
    <location>
        <begin position="1229"/>
        <end position="1231"/>
    </location>
</feature>
<feature type="helix" evidence="14">
    <location>
        <begin position="1233"/>
        <end position="1235"/>
    </location>
</feature>
<feature type="strand" evidence="14">
    <location>
        <begin position="1237"/>
        <end position="1243"/>
    </location>
</feature>
<feature type="strand" evidence="14">
    <location>
        <begin position="1245"/>
        <end position="1253"/>
    </location>
</feature>
<feature type="strand" evidence="14">
    <location>
        <begin position="1258"/>
        <end position="1264"/>
    </location>
</feature>
<feature type="helix" evidence="14">
    <location>
        <begin position="1265"/>
        <end position="1267"/>
    </location>
</feature>
<feature type="strand" evidence="14">
    <location>
        <begin position="1269"/>
        <end position="1273"/>
    </location>
</feature>
<feature type="turn" evidence="14">
    <location>
        <begin position="1275"/>
        <end position="1277"/>
    </location>
</feature>
<feature type="strand" evidence="14">
    <location>
        <begin position="1278"/>
        <end position="1284"/>
    </location>
</feature>
<feature type="strand" evidence="14">
    <location>
        <begin position="1289"/>
        <end position="1293"/>
    </location>
</feature>
<feature type="helix" evidence="14">
    <location>
        <begin position="1297"/>
        <end position="1311"/>
    </location>
</feature>
<feature type="helix" evidence="14">
    <location>
        <begin position="1315"/>
        <end position="1318"/>
    </location>
</feature>
<feature type="turn" evidence="14">
    <location>
        <begin position="1328"/>
        <end position="1330"/>
    </location>
</feature>
<feature type="strand" evidence="14">
    <location>
        <begin position="1332"/>
        <end position="1336"/>
    </location>
</feature>
<feature type="helix" evidence="14">
    <location>
        <begin position="1337"/>
        <end position="1339"/>
    </location>
</feature>
<feature type="strand" evidence="14">
    <location>
        <begin position="1340"/>
        <end position="1345"/>
    </location>
</feature>
<feature type="strand" evidence="14">
    <location>
        <begin position="1354"/>
        <end position="1359"/>
    </location>
</feature>
<feature type="strand" evidence="14">
    <location>
        <begin position="1362"/>
        <end position="1367"/>
    </location>
</feature>
<feature type="helix" evidence="14">
    <location>
        <begin position="1371"/>
        <end position="1381"/>
    </location>
</feature>
<sequence length="2060" mass="237262">MDSFFPEGARVWLRENGQHFPSTVNSCAEGVVVFQTDYGQVFTYKQSTITNQKVTAMHPLHEEGVDDMASLTELHGGSIMYNLFQRYKRNQIYTYIGSIIASVNPYQPIAGLYERATMEQYSRCHLGELPPHIFAIANECYRCLWKRHDNQCVLISGESGAGKTESTKLILKFLSVISQHSLDLCLQEKSSSVEQAILQSSPIMEAFGNAKTVYNNNSSRFGKFVQLNICQKGNIQGGRIVDYLLEKNRVVRQNPGERNYHIFYALLAGLDQGEREEFYLSLPENYHYLNQSGCTEDKTISDQESFRQVIEAMEVMQFSKEEVREVLRLLAGILHLGNIEFITAGGAQISFKTALGRSAELLGLDPTQLTDALTQRSMFLRGEEILTPLSVQQAVDSRDSLAMALYARCFEWVIKKINSRIKGKDDFKSIGILDIFGFENFEVNHFEQFNINYANEKLQEYFNKHIFSLEQLEYSREGLVWEDIDWIDNGECLDLIEKKLGLLALINEESHFPQATDSTLLEKLHNQHANNHFYVKPRVAVNNFGVKHYAGEVQYDVRGILEKNRDTFRDDLLNLLRESRFDFIYDLFEHISSRNNQDTLKCGSKHRRPTVSSQFKDSLHSLMATLSSSNPFFVRCIKPNTQKMPDQFDQAVVLNQLRYSGMLETVRIRKAGYAVRRPFQDFYKRYKVLMRDLALPEDIRGKCTVLLQFYDASNSEWQLGKTKVFLRESLEQKLEKRREEEIDRAAMVIRAHILGYLARKQYRKVLCGVVTIQKNYRAFLARKRFLHLKKAAIVFQKQLRGRLARKVYRQLLAEKRELEERKRLEEEKKREEEERERKRAQREADLLRAQQEAETRKQQELEALQKNQREADLTRELEKQRENKQVEEILRLEKEIEDLQRMKEQQELSLTEASLQKLQQLRDEELRRLEDEACRAAQEFLESLNFDEIDECVRNIERSLSVGSEISGELSELAENASGEKPNFNFSQPYPEEEVDEGFEADDDAFKDSPNPSEHGHSDQRTSGIRTSDDSSEEDPYMNYTVVPTSPSADSTVLLAASVQDSASLHNSSSGESTYCMPQNNGDLPSPDGDYDYDQDDYEDGAITSGSSVTFSNSYGSQWSPDYRYSVGTYNSSGAYRFSSEGAQSSFEDSEEDFDSRFDTDDELSYRRDSVYSCVTLPYFHSFLYMKGGLMNSWKRRWCVLKDETFLWFRSKQEALKQGWLHKKGGGSSTLSRRNWKKRWFVLRQSKLMYFENDSEEKLKGTVEVRSAKEIIDNTNKENGIDIIMADRTFHLIAESPEDASQWFSVLSQVHSSTDQEIREMHDEQANPQNAVGTLDVGLIDSVCASDSPDRPNSFVIITANRVLHCNADTPEEMHHWITLLQRSKGDTRVEGQEFIVRGWLHKEVKNSPKMSSLKLKKRWFVLTHNSLDYYKSSEKNALKLGTLVLNSLCSVVPPDEKIFKETGYWNVTVYGRKHCYRLYTKLLNEATRWSSAIQNVTDTKAPIDTPTQQLIQDIKENCLNSDVVEQIYKRNPILRYTHHPLHSPLLPLPYGDINLNLLKDKGYTTLQDEAIKIFNSLQQLESMSDPIPIIQGILQTGHDLRPLRDELYCQLIKQTNKVPHPGSVGNLYSWQILTCLSCTFLPSRGILKYLKFHLKRIREQFPGTEMEKYALFIYESLKKTKCREFVPSRDEIEALIHRQEMTSTVYCHGGGSCKITINSHTTAGEVVEKLIRGLAMEDSRNMFALFEYNGQVDKAIESRTIVADVLAKFEKLAATSEAGDAPWKFYFKLYCFLDTDSMPKDSVEFAFMFEQAHEAVIHGHHPAPEESLQVLAALRLQYLQGDYTLHTSVPPLEEVYSLQRLKARISQSTKTFTPYERLEKRRTSFLEGTLRRSFRTGTVARQKVEEEQMLDMWIKEEICSARASIIDKWKKLQGVSQEQAMAKYMALIKEWPGYGSTLFDVECKEGGFPQELWLGVSADAVSVYKRGEGKPLEVFQYEHILSFGAPLANTYKIVVDERELLFETSEVVDVAKLMKAYISMIVKKRYSTTRSLSSQGSSR</sequence>
<evidence type="ECO:0000250" key="1"/>
<evidence type="ECO:0000250" key="2">
    <source>
        <dbReference type="UniProtKB" id="F8VQB6"/>
    </source>
</evidence>
<evidence type="ECO:0000250" key="3">
    <source>
        <dbReference type="UniProtKB" id="P79114"/>
    </source>
</evidence>
<evidence type="ECO:0000250" key="4">
    <source>
        <dbReference type="UniProtKB" id="Q9HD67"/>
    </source>
</evidence>
<evidence type="ECO:0000255" key="5">
    <source>
        <dbReference type="PROSITE-ProRule" id="PRU00084"/>
    </source>
</evidence>
<evidence type="ECO:0000255" key="6">
    <source>
        <dbReference type="PROSITE-ProRule" id="PRU00116"/>
    </source>
</evidence>
<evidence type="ECO:0000255" key="7">
    <source>
        <dbReference type="PROSITE-ProRule" id="PRU00145"/>
    </source>
</evidence>
<evidence type="ECO:0000255" key="8">
    <source>
        <dbReference type="PROSITE-ProRule" id="PRU00359"/>
    </source>
</evidence>
<evidence type="ECO:0000255" key="9">
    <source>
        <dbReference type="PROSITE-ProRule" id="PRU00782"/>
    </source>
</evidence>
<evidence type="ECO:0000256" key="10">
    <source>
        <dbReference type="SAM" id="MobiDB-lite"/>
    </source>
</evidence>
<evidence type="ECO:0000269" key="11">
    <source>
    </source>
</evidence>
<evidence type="ECO:0000305" key="12"/>
<evidence type="ECO:0007744" key="13">
    <source>
    </source>
</evidence>
<evidence type="ECO:0007829" key="14">
    <source>
        <dbReference type="PDB" id="3TFM"/>
    </source>
</evidence>
<keyword id="KW-0002">3D-structure</keyword>
<keyword id="KW-0007">Acetylation</keyword>
<keyword id="KW-0009">Actin-binding</keyword>
<keyword id="KW-0067">ATP-binding</keyword>
<keyword id="KW-0112">Calmodulin-binding</keyword>
<keyword id="KW-1003">Cell membrane</keyword>
<keyword id="KW-0966">Cell projection</keyword>
<keyword id="KW-0175">Coiled coil</keyword>
<keyword id="KW-0963">Cytoplasm</keyword>
<keyword id="KW-0206">Cytoskeleton</keyword>
<keyword id="KW-0472">Membrane</keyword>
<keyword id="KW-0505">Motor protein</keyword>
<keyword id="KW-0518">Myosin</keyword>
<keyword id="KW-0547">Nucleotide-binding</keyword>
<keyword id="KW-0597">Phosphoprotein</keyword>
<keyword id="KW-1185">Reference proteome</keyword>
<keyword id="KW-0677">Repeat</keyword>
<keyword id="KW-0813">Transport</keyword>
<name>MYO10_RAT</name>
<organism>
    <name type="scientific">Rattus norvegicus</name>
    <name type="common">Rat</name>
    <dbReference type="NCBI Taxonomy" id="10116"/>
    <lineage>
        <taxon>Eukaryota</taxon>
        <taxon>Metazoa</taxon>
        <taxon>Chordata</taxon>
        <taxon>Craniata</taxon>
        <taxon>Vertebrata</taxon>
        <taxon>Euteleostomi</taxon>
        <taxon>Mammalia</taxon>
        <taxon>Eutheria</taxon>
        <taxon>Euarchontoglires</taxon>
        <taxon>Glires</taxon>
        <taxon>Rodentia</taxon>
        <taxon>Myomorpha</taxon>
        <taxon>Muroidea</taxon>
        <taxon>Muridae</taxon>
        <taxon>Murinae</taxon>
        <taxon>Rattus</taxon>
    </lineage>
</organism>
<gene>
    <name type="primary">Myo10</name>
</gene>
<protein>
    <recommendedName>
        <fullName>Unconventional myosin-X</fullName>
    </recommendedName>
    <alternativeName>
        <fullName>Unconventional myosin-10</fullName>
    </alternativeName>
</protein>
<reference key="1">
    <citation type="journal article" date="2004" name="Nature">
        <title>Genome sequence of the Brown Norway rat yields insights into mammalian evolution.</title>
        <authorList>
            <person name="Gibbs R.A."/>
            <person name="Weinstock G.M."/>
            <person name="Metzker M.L."/>
            <person name="Muzny D.M."/>
            <person name="Sodergren E.J."/>
            <person name="Scherer S."/>
            <person name="Scott G."/>
            <person name="Steffen D."/>
            <person name="Worley K.C."/>
            <person name="Burch P.E."/>
            <person name="Okwuonu G."/>
            <person name="Hines S."/>
            <person name="Lewis L."/>
            <person name="Deramo C."/>
            <person name="Delgado O."/>
            <person name="Dugan-Rocha S."/>
            <person name="Miner G."/>
            <person name="Morgan M."/>
            <person name="Hawes A."/>
            <person name="Gill R."/>
            <person name="Holt R.A."/>
            <person name="Adams M.D."/>
            <person name="Amanatides P.G."/>
            <person name="Baden-Tillson H."/>
            <person name="Barnstead M."/>
            <person name="Chin S."/>
            <person name="Evans C.A."/>
            <person name="Ferriera S."/>
            <person name="Fosler C."/>
            <person name="Glodek A."/>
            <person name="Gu Z."/>
            <person name="Jennings D."/>
            <person name="Kraft C.L."/>
            <person name="Nguyen T."/>
            <person name="Pfannkoch C.M."/>
            <person name="Sitter C."/>
            <person name="Sutton G.G."/>
            <person name="Venter J.C."/>
            <person name="Woodage T."/>
            <person name="Smith D."/>
            <person name="Lee H.-M."/>
            <person name="Gustafson E."/>
            <person name="Cahill P."/>
            <person name="Kana A."/>
            <person name="Doucette-Stamm L."/>
            <person name="Weinstock K."/>
            <person name="Fechtel K."/>
            <person name="Weiss R.B."/>
            <person name="Dunn D.M."/>
            <person name="Green E.D."/>
            <person name="Blakesley R.W."/>
            <person name="Bouffard G.G."/>
            <person name="De Jong P.J."/>
            <person name="Osoegawa K."/>
            <person name="Zhu B."/>
            <person name="Marra M."/>
            <person name="Schein J."/>
            <person name="Bosdet I."/>
            <person name="Fjell C."/>
            <person name="Jones S."/>
            <person name="Krzywinski M."/>
            <person name="Mathewson C."/>
            <person name="Siddiqui A."/>
            <person name="Wye N."/>
            <person name="McPherson J."/>
            <person name="Zhao S."/>
            <person name="Fraser C.M."/>
            <person name="Shetty J."/>
            <person name="Shatsman S."/>
            <person name="Geer K."/>
            <person name="Chen Y."/>
            <person name="Abramzon S."/>
            <person name="Nierman W.C."/>
            <person name="Havlak P.H."/>
            <person name="Chen R."/>
            <person name="Durbin K.J."/>
            <person name="Egan A."/>
            <person name="Ren Y."/>
            <person name="Song X.-Z."/>
            <person name="Li B."/>
            <person name="Liu Y."/>
            <person name="Qin X."/>
            <person name="Cawley S."/>
            <person name="Cooney A.J."/>
            <person name="D'Souza L.M."/>
            <person name="Martin K."/>
            <person name="Wu J.Q."/>
            <person name="Gonzalez-Garay M.L."/>
            <person name="Jackson A.R."/>
            <person name="Kalafus K.J."/>
            <person name="McLeod M.P."/>
            <person name="Milosavljevic A."/>
            <person name="Virk D."/>
            <person name="Volkov A."/>
            <person name="Wheeler D.A."/>
            <person name="Zhang Z."/>
            <person name="Bailey J.A."/>
            <person name="Eichler E.E."/>
            <person name="Tuzun E."/>
            <person name="Birney E."/>
            <person name="Mongin E."/>
            <person name="Ureta-Vidal A."/>
            <person name="Woodwark C."/>
            <person name="Zdobnov E."/>
            <person name="Bork P."/>
            <person name="Suyama M."/>
            <person name="Torrents D."/>
            <person name="Alexandersson M."/>
            <person name="Trask B.J."/>
            <person name="Young J.M."/>
            <person name="Huang H."/>
            <person name="Wang H."/>
            <person name="Xing H."/>
            <person name="Daniels S."/>
            <person name="Gietzen D."/>
            <person name="Schmidt J."/>
            <person name="Stevens K."/>
            <person name="Vitt U."/>
            <person name="Wingrove J."/>
            <person name="Camara F."/>
            <person name="Mar Alba M."/>
            <person name="Abril J.F."/>
            <person name="Guigo R."/>
            <person name="Smit A."/>
            <person name="Dubchak I."/>
            <person name="Rubin E.M."/>
            <person name="Couronne O."/>
            <person name="Poliakov A."/>
            <person name="Huebner N."/>
            <person name="Ganten D."/>
            <person name="Goesele C."/>
            <person name="Hummel O."/>
            <person name="Kreitler T."/>
            <person name="Lee Y.-A."/>
            <person name="Monti J."/>
            <person name="Schulz H."/>
            <person name="Zimdahl H."/>
            <person name="Himmelbauer H."/>
            <person name="Lehrach H."/>
            <person name="Jacob H.J."/>
            <person name="Bromberg S."/>
            <person name="Gullings-Handley J."/>
            <person name="Jensen-Seaman M.I."/>
            <person name="Kwitek A.E."/>
            <person name="Lazar J."/>
            <person name="Pasko D."/>
            <person name="Tonellato P.J."/>
            <person name="Twigger S."/>
            <person name="Ponting C.P."/>
            <person name="Duarte J.M."/>
            <person name="Rice S."/>
            <person name="Goodstadt L."/>
            <person name="Beatson S.A."/>
            <person name="Emes R.D."/>
            <person name="Winter E.E."/>
            <person name="Webber C."/>
            <person name="Brandt P."/>
            <person name="Nyakatura G."/>
            <person name="Adetobi M."/>
            <person name="Chiaromonte F."/>
            <person name="Elnitski L."/>
            <person name="Eswara P."/>
            <person name="Hardison R.C."/>
            <person name="Hou M."/>
            <person name="Kolbe D."/>
            <person name="Makova K."/>
            <person name="Miller W."/>
            <person name="Nekrutenko A."/>
            <person name="Riemer C."/>
            <person name="Schwartz S."/>
            <person name="Taylor J."/>
            <person name="Yang S."/>
            <person name="Zhang Y."/>
            <person name="Lindpaintner K."/>
            <person name="Andrews T.D."/>
            <person name="Caccamo M."/>
            <person name="Clamp M."/>
            <person name="Clarke L."/>
            <person name="Curwen V."/>
            <person name="Durbin R.M."/>
            <person name="Eyras E."/>
            <person name="Searle S.M."/>
            <person name="Cooper G.M."/>
            <person name="Batzoglou S."/>
            <person name="Brudno M."/>
            <person name="Sidow A."/>
            <person name="Stone E.A."/>
            <person name="Payseur B.A."/>
            <person name="Bourque G."/>
            <person name="Lopez-Otin C."/>
            <person name="Puente X.S."/>
            <person name="Chakrabarti K."/>
            <person name="Chatterji S."/>
            <person name="Dewey C."/>
            <person name="Pachter L."/>
            <person name="Bray N."/>
            <person name="Yap V.B."/>
            <person name="Caspi A."/>
            <person name="Tesler G."/>
            <person name="Pevzner P.A."/>
            <person name="Haussler D."/>
            <person name="Roskin K.M."/>
            <person name="Baertsch R."/>
            <person name="Clawson H."/>
            <person name="Furey T.S."/>
            <person name="Hinrichs A.S."/>
            <person name="Karolchik D."/>
            <person name="Kent W.J."/>
            <person name="Rosenbloom K.R."/>
            <person name="Trumbower H."/>
            <person name="Weirauch M."/>
            <person name="Cooper D.N."/>
            <person name="Stenson P.D."/>
            <person name="Ma B."/>
            <person name="Brent M."/>
            <person name="Arumugam M."/>
            <person name="Shteynberg D."/>
            <person name="Copley R.R."/>
            <person name="Taylor M.S."/>
            <person name="Riethman H."/>
            <person name="Mudunuri U."/>
            <person name="Peterson J."/>
            <person name="Guyer M."/>
            <person name="Felsenfeld A."/>
            <person name="Old S."/>
            <person name="Mockrin S."/>
            <person name="Collins F.S."/>
        </authorList>
    </citation>
    <scope>NUCLEOTIDE SEQUENCE [LARGE SCALE GENOMIC DNA]</scope>
    <source>
        <strain>Brown Norway</strain>
    </source>
</reference>
<reference key="2">
    <citation type="journal article" date="2012" name="Nat. Commun.">
        <title>Quantitative maps of protein phosphorylation sites across 14 different rat organs and tissues.</title>
        <authorList>
            <person name="Lundby A."/>
            <person name="Secher A."/>
            <person name="Lage K."/>
            <person name="Nordsborg N.B."/>
            <person name="Dmytriyev A."/>
            <person name="Lundby C."/>
            <person name="Olsen J.V."/>
        </authorList>
    </citation>
    <scope>PHOSPHORYLATION [LARGE SCALE ANALYSIS] AT SER-961; SER-964; SER-967 AND THR-1160</scope>
    <scope>IDENTIFICATION BY MASS SPECTROMETRY [LARGE SCALE ANALYSIS]</scope>
</reference>
<reference key="3">
    <citation type="journal article" date="2011" name="Mol. Biol. Cell">
        <title>Structural basis of the myosin X PH1(N)-PH2-PH1(C) tandem as a specific and acute cellular PI(3,4,5)P(3) sensor.</title>
        <authorList>
            <person name="Lu Q."/>
            <person name="Yu J."/>
            <person name="Yan J."/>
            <person name="Wei Z."/>
            <person name="Zhang M."/>
        </authorList>
    </citation>
    <scope>X-RAY CRYSTALLOGRAPHY (2.53 ANGSTROMS) OF 1178-1385</scope>
    <scope>FUNCTION</scope>
    <scope>SUBCELLULAR LOCATION</scope>
    <scope>DOMAIN</scope>
    <scope>INTERACTION WITH PHOSPHATIDYLINOSITOL-3,4,5-TRISPHOSPHATE</scope>
</reference>